<accession>Q6FKL3</accession>
<proteinExistence type="inferred from homology"/>
<reference key="1">
    <citation type="journal article" date="2004" name="Nature">
        <title>Genome evolution in yeasts.</title>
        <authorList>
            <person name="Dujon B."/>
            <person name="Sherman D."/>
            <person name="Fischer G."/>
            <person name="Durrens P."/>
            <person name="Casaregola S."/>
            <person name="Lafontaine I."/>
            <person name="de Montigny J."/>
            <person name="Marck C."/>
            <person name="Neuveglise C."/>
            <person name="Talla E."/>
            <person name="Goffard N."/>
            <person name="Frangeul L."/>
            <person name="Aigle M."/>
            <person name="Anthouard V."/>
            <person name="Babour A."/>
            <person name="Barbe V."/>
            <person name="Barnay S."/>
            <person name="Blanchin S."/>
            <person name="Beckerich J.-M."/>
            <person name="Beyne E."/>
            <person name="Bleykasten C."/>
            <person name="Boisrame A."/>
            <person name="Boyer J."/>
            <person name="Cattolico L."/>
            <person name="Confanioleri F."/>
            <person name="de Daruvar A."/>
            <person name="Despons L."/>
            <person name="Fabre E."/>
            <person name="Fairhead C."/>
            <person name="Ferry-Dumazet H."/>
            <person name="Groppi A."/>
            <person name="Hantraye F."/>
            <person name="Hennequin C."/>
            <person name="Jauniaux N."/>
            <person name="Joyet P."/>
            <person name="Kachouri R."/>
            <person name="Kerrest A."/>
            <person name="Koszul R."/>
            <person name="Lemaire M."/>
            <person name="Lesur I."/>
            <person name="Ma L."/>
            <person name="Muller H."/>
            <person name="Nicaud J.-M."/>
            <person name="Nikolski M."/>
            <person name="Oztas S."/>
            <person name="Ozier-Kalogeropoulos O."/>
            <person name="Pellenz S."/>
            <person name="Potier S."/>
            <person name="Richard G.-F."/>
            <person name="Straub M.-L."/>
            <person name="Suleau A."/>
            <person name="Swennen D."/>
            <person name="Tekaia F."/>
            <person name="Wesolowski-Louvel M."/>
            <person name="Westhof E."/>
            <person name="Wirth B."/>
            <person name="Zeniou-Meyer M."/>
            <person name="Zivanovic Y."/>
            <person name="Bolotin-Fukuhara M."/>
            <person name="Thierry A."/>
            <person name="Bouchier C."/>
            <person name="Caudron B."/>
            <person name="Scarpelli C."/>
            <person name="Gaillardin C."/>
            <person name="Weissenbach J."/>
            <person name="Wincker P."/>
            <person name="Souciet J.-L."/>
        </authorList>
    </citation>
    <scope>NUCLEOTIDE SEQUENCE [LARGE SCALE GENOMIC DNA]</scope>
    <source>
        <strain>ATCC 2001 / BCRC 20586 / JCM 3761 / NBRC 0622 / NRRL Y-65 / CBS 138</strain>
    </source>
</reference>
<protein>
    <recommendedName>
        <fullName>Protein ROT1</fullName>
    </recommendedName>
</protein>
<feature type="signal peptide" evidence="2">
    <location>
        <begin position="1"/>
        <end position="21"/>
    </location>
</feature>
<feature type="chain" id="PRO_0000333408" description="Protein ROT1">
    <location>
        <begin position="22"/>
        <end position="263"/>
    </location>
</feature>
<feature type="topological domain" description="Lumenal" evidence="2">
    <location>
        <begin position="22"/>
        <end position="241"/>
    </location>
</feature>
<feature type="transmembrane region" description="Helical" evidence="2">
    <location>
        <begin position="242"/>
        <end position="262"/>
    </location>
</feature>
<feature type="topological domain" description="Cytoplasmic" evidence="2">
    <location>
        <position position="263"/>
    </location>
</feature>
<feature type="region of interest" description="Disordered" evidence="3">
    <location>
        <begin position="177"/>
        <end position="212"/>
    </location>
</feature>
<feature type="compositionally biased region" description="Polar residues" evidence="3">
    <location>
        <begin position="178"/>
        <end position="193"/>
    </location>
</feature>
<feature type="glycosylation site" description="N-linked (GlcNAc...) asparagine" evidence="2">
    <location>
        <position position="99"/>
    </location>
</feature>
<feature type="glycosylation site" description="N-linked (GlcNAc...) asparagine" evidence="2">
    <location>
        <position position="131"/>
    </location>
</feature>
<organism>
    <name type="scientific">Candida glabrata (strain ATCC 2001 / BCRC 20586 / JCM 3761 / NBRC 0622 / NRRL Y-65 / CBS 138)</name>
    <name type="common">Yeast</name>
    <name type="synonym">Nakaseomyces glabratus</name>
    <dbReference type="NCBI Taxonomy" id="284593"/>
    <lineage>
        <taxon>Eukaryota</taxon>
        <taxon>Fungi</taxon>
        <taxon>Dikarya</taxon>
        <taxon>Ascomycota</taxon>
        <taxon>Saccharomycotina</taxon>
        <taxon>Saccharomycetes</taxon>
        <taxon>Saccharomycetales</taxon>
        <taxon>Saccharomycetaceae</taxon>
        <taxon>Nakaseomyces</taxon>
    </lineage>
</organism>
<comment type="function">
    <text evidence="1">Required for normal levels of the cell wall 1,6-beta-glucan. Involved in a protein folding machinery chaperoning proteins acting in various physiological processes including cell wall synthesis and lysis of autophagic bodies (By similarity).</text>
</comment>
<comment type="subcellular location">
    <subcellularLocation>
        <location evidence="1">Endoplasmic reticulum membrane</location>
        <topology evidence="1">Single-pass type I membrane protein</topology>
    </subcellularLocation>
</comment>
<comment type="similarity">
    <text evidence="4">Belongs to the ROT1 family.</text>
</comment>
<sequence>MVRSLLFALLSVAGLVAGDAADLVGTWSSKSNQVFTGPGFYDPIDELLIEPALPGISYSFTEDGWFEEASYQVSGNPKNPACPKASLIYQHGKFELLDNGTLILHPIEVDGRQLFSDPCSDNGISTYTRYNQTEVFKSFETFIDPYHGVYTLQLYQFNGAPLPPLYLAYRPPMMLPTETLNPTDGSTGSHPTGSSESESQESDDTSKRSLLKKRSLREHVKRSLENRYKTNAVKKSDSIFNAAFVWYTSFFLVGAGSLIFISS</sequence>
<gene>
    <name type="primary">ROT1</name>
    <name type="ordered locus">CAGL0L10670g</name>
</gene>
<keyword id="KW-0256">Endoplasmic reticulum</keyword>
<keyword id="KW-0325">Glycoprotein</keyword>
<keyword id="KW-0472">Membrane</keyword>
<keyword id="KW-1185">Reference proteome</keyword>
<keyword id="KW-0732">Signal</keyword>
<keyword id="KW-0812">Transmembrane</keyword>
<keyword id="KW-1133">Transmembrane helix</keyword>
<name>ROT1_CANGA</name>
<evidence type="ECO:0000250" key="1"/>
<evidence type="ECO:0000255" key="2"/>
<evidence type="ECO:0000256" key="3">
    <source>
        <dbReference type="SAM" id="MobiDB-lite"/>
    </source>
</evidence>
<evidence type="ECO:0000305" key="4"/>
<dbReference type="EMBL" id="CR380958">
    <property type="protein sequence ID" value="CAG62205.1"/>
    <property type="molecule type" value="Genomic_DNA"/>
</dbReference>
<dbReference type="RefSeq" id="XP_449231.1">
    <property type="nucleotide sequence ID" value="XM_449231.1"/>
</dbReference>
<dbReference type="FunCoup" id="Q6FKL3">
    <property type="interactions" value="36"/>
</dbReference>
<dbReference type="STRING" id="284593.Q6FKL3"/>
<dbReference type="GlyCosmos" id="Q6FKL3">
    <property type="glycosylation" value="2 sites, No reported glycans"/>
</dbReference>
<dbReference type="EnsemblFungi" id="CAGL0L10670g-T">
    <property type="protein sequence ID" value="CAGL0L10670g-T-p1"/>
    <property type="gene ID" value="CAGL0L10670g"/>
</dbReference>
<dbReference type="KEGG" id="cgr:2891042"/>
<dbReference type="CGD" id="CAL0135740">
    <property type="gene designation" value="CAGL0L10670g"/>
</dbReference>
<dbReference type="VEuPathDB" id="FungiDB:B1J91_L10670g"/>
<dbReference type="VEuPathDB" id="FungiDB:CAGL0L10670g"/>
<dbReference type="eggNOG" id="ENOG502QQTG">
    <property type="taxonomic scope" value="Eukaryota"/>
</dbReference>
<dbReference type="HOGENOM" id="CLU_071622_0_0_1"/>
<dbReference type="InParanoid" id="Q6FKL3"/>
<dbReference type="OMA" id="YKPPQML"/>
<dbReference type="Proteomes" id="UP000002428">
    <property type="component" value="Chromosome L"/>
</dbReference>
<dbReference type="GO" id="GO:0005789">
    <property type="term" value="C:endoplasmic reticulum membrane"/>
    <property type="evidence" value="ECO:0007669"/>
    <property type="project" value="UniProtKB-SubCell"/>
</dbReference>
<dbReference type="GO" id="GO:0051082">
    <property type="term" value="F:unfolded protein binding"/>
    <property type="evidence" value="ECO:0007669"/>
    <property type="project" value="EnsemblFungi"/>
</dbReference>
<dbReference type="GO" id="GO:0006458">
    <property type="term" value="P:'de novo' protein folding"/>
    <property type="evidence" value="ECO:0007669"/>
    <property type="project" value="EnsemblFungi"/>
</dbReference>
<dbReference type="GO" id="GO:0007118">
    <property type="term" value="P:budding cell apical bud growth"/>
    <property type="evidence" value="ECO:0007669"/>
    <property type="project" value="EnsemblFungi"/>
</dbReference>
<dbReference type="GO" id="GO:0030950">
    <property type="term" value="P:establishment or maintenance of actin cytoskeleton polarity"/>
    <property type="evidence" value="ECO:0007669"/>
    <property type="project" value="EnsemblFungi"/>
</dbReference>
<dbReference type="GO" id="GO:0009272">
    <property type="term" value="P:fungal-type cell wall biogenesis"/>
    <property type="evidence" value="ECO:0007669"/>
    <property type="project" value="EnsemblFungi"/>
</dbReference>
<dbReference type="GO" id="GO:0034975">
    <property type="term" value="P:protein folding in endoplasmic reticulum"/>
    <property type="evidence" value="ECO:0007669"/>
    <property type="project" value="EnsemblFungi"/>
</dbReference>
<dbReference type="GO" id="GO:0006487">
    <property type="term" value="P:protein N-linked glycosylation"/>
    <property type="evidence" value="ECO:0007669"/>
    <property type="project" value="EnsemblFungi"/>
</dbReference>
<dbReference type="GO" id="GO:0035269">
    <property type="term" value="P:protein O-linked mannosylation"/>
    <property type="evidence" value="ECO:0007669"/>
    <property type="project" value="EnsemblFungi"/>
</dbReference>
<dbReference type="InterPro" id="IPR019623">
    <property type="entry name" value="Rot1"/>
</dbReference>
<dbReference type="PANTHER" id="PTHR28090">
    <property type="entry name" value="PROTEIN ROT1"/>
    <property type="match status" value="1"/>
</dbReference>
<dbReference type="PANTHER" id="PTHR28090:SF1">
    <property type="entry name" value="PROTEIN ROT1"/>
    <property type="match status" value="1"/>
</dbReference>
<dbReference type="Pfam" id="PF10681">
    <property type="entry name" value="Rot1"/>
    <property type="match status" value="1"/>
</dbReference>
<dbReference type="PIRSF" id="PIRSF017290">
    <property type="entry name" value="ROT1_prd"/>
    <property type="match status" value="1"/>
</dbReference>